<gene>
    <name evidence="1" type="primary">argJ</name>
    <name type="ordered locus">lmo1590</name>
</gene>
<accession>Q8Y6U2</accession>
<reference key="1">
    <citation type="journal article" date="2001" name="Science">
        <title>Comparative genomics of Listeria species.</title>
        <authorList>
            <person name="Glaser P."/>
            <person name="Frangeul L."/>
            <person name="Buchrieser C."/>
            <person name="Rusniok C."/>
            <person name="Amend A."/>
            <person name="Baquero F."/>
            <person name="Berche P."/>
            <person name="Bloecker H."/>
            <person name="Brandt P."/>
            <person name="Chakraborty T."/>
            <person name="Charbit A."/>
            <person name="Chetouani F."/>
            <person name="Couve E."/>
            <person name="de Daruvar A."/>
            <person name="Dehoux P."/>
            <person name="Domann E."/>
            <person name="Dominguez-Bernal G."/>
            <person name="Duchaud E."/>
            <person name="Durant L."/>
            <person name="Dussurget O."/>
            <person name="Entian K.-D."/>
            <person name="Fsihi H."/>
            <person name="Garcia-del Portillo F."/>
            <person name="Garrido P."/>
            <person name="Gautier L."/>
            <person name="Goebel W."/>
            <person name="Gomez-Lopez N."/>
            <person name="Hain T."/>
            <person name="Hauf J."/>
            <person name="Jackson D."/>
            <person name="Jones L.-M."/>
            <person name="Kaerst U."/>
            <person name="Kreft J."/>
            <person name="Kuhn M."/>
            <person name="Kunst F."/>
            <person name="Kurapkat G."/>
            <person name="Madueno E."/>
            <person name="Maitournam A."/>
            <person name="Mata Vicente J."/>
            <person name="Ng E."/>
            <person name="Nedjari H."/>
            <person name="Nordsiek G."/>
            <person name="Novella S."/>
            <person name="de Pablos B."/>
            <person name="Perez-Diaz J.-C."/>
            <person name="Purcell R."/>
            <person name="Remmel B."/>
            <person name="Rose M."/>
            <person name="Schlueter T."/>
            <person name="Simoes N."/>
            <person name="Tierrez A."/>
            <person name="Vazquez-Boland J.-A."/>
            <person name="Voss H."/>
            <person name="Wehland J."/>
            <person name="Cossart P."/>
        </authorList>
    </citation>
    <scope>NUCLEOTIDE SEQUENCE [LARGE SCALE GENOMIC DNA]</scope>
    <source>
        <strain>ATCC BAA-679 / EGD-e</strain>
    </source>
</reference>
<evidence type="ECO:0000255" key="1">
    <source>
        <dbReference type="HAMAP-Rule" id="MF_01106"/>
    </source>
</evidence>
<comment type="function">
    <text evidence="1">Catalyzes two activities which are involved in the cyclic version of arginine biosynthesis: the synthesis of N-acetylglutamate from glutamate and acetyl-CoA as the acetyl donor, and of ornithine by transacetylation between N(2)-acetylornithine and glutamate.</text>
</comment>
<comment type="catalytic activity">
    <reaction evidence="1">
        <text>N(2)-acetyl-L-ornithine + L-glutamate = N-acetyl-L-glutamate + L-ornithine</text>
        <dbReference type="Rhea" id="RHEA:15349"/>
        <dbReference type="ChEBI" id="CHEBI:29985"/>
        <dbReference type="ChEBI" id="CHEBI:44337"/>
        <dbReference type="ChEBI" id="CHEBI:46911"/>
        <dbReference type="ChEBI" id="CHEBI:57805"/>
        <dbReference type="EC" id="2.3.1.35"/>
    </reaction>
</comment>
<comment type="catalytic activity">
    <reaction evidence="1">
        <text>L-glutamate + acetyl-CoA = N-acetyl-L-glutamate + CoA + H(+)</text>
        <dbReference type="Rhea" id="RHEA:24292"/>
        <dbReference type="ChEBI" id="CHEBI:15378"/>
        <dbReference type="ChEBI" id="CHEBI:29985"/>
        <dbReference type="ChEBI" id="CHEBI:44337"/>
        <dbReference type="ChEBI" id="CHEBI:57287"/>
        <dbReference type="ChEBI" id="CHEBI:57288"/>
        <dbReference type="EC" id="2.3.1.1"/>
    </reaction>
</comment>
<comment type="pathway">
    <text evidence="1">Amino-acid biosynthesis; L-arginine biosynthesis; L-ornithine and N-acetyl-L-glutamate from L-glutamate and N(2)-acetyl-L-ornithine (cyclic): step 1/1.</text>
</comment>
<comment type="pathway">
    <text evidence="1">Amino-acid biosynthesis; L-arginine biosynthesis; N(2)-acetyl-L-ornithine from L-glutamate: step 1/4.</text>
</comment>
<comment type="subunit">
    <text evidence="1">Heterotetramer of two alpha and two beta chains.</text>
</comment>
<comment type="subcellular location">
    <subcellularLocation>
        <location evidence="1">Cytoplasm</location>
    </subcellularLocation>
</comment>
<comment type="similarity">
    <text evidence="1">Belongs to the ArgJ family.</text>
</comment>
<protein>
    <recommendedName>
        <fullName evidence="1">Arginine biosynthesis bifunctional protein ArgJ</fullName>
    </recommendedName>
    <domain>
        <recommendedName>
            <fullName evidence="1">Glutamate N-acetyltransferase</fullName>
            <ecNumber evidence="1">2.3.1.35</ecNumber>
        </recommendedName>
        <alternativeName>
            <fullName evidence="1">Ornithine acetyltransferase</fullName>
            <shortName evidence="1">OATase</shortName>
        </alternativeName>
        <alternativeName>
            <fullName evidence="1">Ornithine transacetylase</fullName>
        </alternativeName>
    </domain>
    <domain>
        <recommendedName>
            <fullName evidence="1">Amino-acid acetyltransferase</fullName>
            <ecNumber evidence="1">2.3.1.1</ecNumber>
        </recommendedName>
        <alternativeName>
            <fullName evidence="1">N-acetylglutamate synthase</fullName>
            <shortName evidence="1">AGSase</shortName>
        </alternativeName>
    </domain>
    <component>
        <recommendedName>
            <fullName evidence="1">Arginine biosynthesis bifunctional protein ArgJ alpha chain</fullName>
        </recommendedName>
    </component>
    <component>
        <recommendedName>
            <fullName evidence="1">Arginine biosynthesis bifunctional protein ArgJ beta chain</fullName>
        </recommendedName>
    </component>
</protein>
<sequence>MELIKGNIASPKGFYADGKHAGLKRKRNDIGWIYSEVPANAAAVYTMNQMQAAPIFVTKDSFQSNAKLQAIIVNSGNANACTGNQGMLDALAMRAQTAEKLEIPLDSVAVASTGIIGDMLPMDKINAGIEMLEKQTGNAADFEEAILTTDTFQKQISFQTEIGGRKVTMSGVAKGSGMIHPNMATMLAFITTDAAIPAELLQKLLKIKVDKTFNQITVDGDTSTNDMVVVMANGCAENPMLQEGTADFAKFADMFQAVTEHLAKSIARDGEGATKLIEVQVNGATKTEDARMIAKKIVSSSLVKTAAFGGDGNWGRIICAIGYSGGRFAPDNITIKIGGIEILNHSSQTIYNQQALDAYLEEEHIIIEVDLHIGLESGTAWGCDLSYEYVKINACYRT</sequence>
<proteinExistence type="inferred from homology"/>
<keyword id="KW-0012">Acyltransferase</keyword>
<keyword id="KW-0028">Amino-acid biosynthesis</keyword>
<keyword id="KW-0055">Arginine biosynthesis</keyword>
<keyword id="KW-0068">Autocatalytic cleavage</keyword>
<keyword id="KW-0963">Cytoplasm</keyword>
<keyword id="KW-0511">Multifunctional enzyme</keyword>
<keyword id="KW-1185">Reference proteome</keyword>
<keyword id="KW-0808">Transferase</keyword>
<organism>
    <name type="scientific">Listeria monocytogenes serovar 1/2a (strain ATCC BAA-679 / EGD-e)</name>
    <dbReference type="NCBI Taxonomy" id="169963"/>
    <lineage>
        <taxon>Bacteria</taxon>
        <taxon>Bacillati</taxon>
        <taxon>Bacillota</taxon>
        <taxon>Bacilli</taxon>
        <taxon>Bacillales</taxon>
        <taxon>Listeriaceae</taxon>
        <taxon>Listeria</taxon>
    </lineage>
</organism>
<dbReference type="EC" id="2.3.1.35" evidence="1"/>
<dbReference type="EC" id="2.3.1.1" evidence="1"/>
<dbReference type="EMBL" id="AL591979">
    <property type="protein sequence ID" value="CAC99668.1"/>
    <property type="molecule type" value="Genomic_DNA"/>
</dbReference>
<dbReference type="PIR" id="AF1273">
    <property type="entry name" value="AF1273"/>
</dbReference>
<dbReference type="RefSeq" id="NP_465115.1">
    <property type="nucleotide sequence ID" value="NC_003210.1"/>
</dbReference>
<dbReference type="RefSeq" id="WP_010989754.1">
    <property type="nucleotide sequence ID" value="NZ_CP149495.1"/>
</dbReference>
<dbReference type="SMR" id="Q8Y6U2"/>
<dbReference type="STRING" id="169963.gene:17594247"/>
<dbReference type="MEROPS" id="T05.002"/>
<dbReference type="PaxDb" id="169963-lmo1590"/>
<dbReference type="EnsemblBacteria" id="CAC99668">
    <property type="protein sequence ID" value="CAC99668"/>
    <property type="gene ID" value="CAC99668"/>
</dbReference>
<dbReference type="GeneID" id="984450"/>
<dbReference type="KEGG" id="lmo:lmo1590"/>
<dbReference type="PATRIC" id="fig|169963.11.peg.1632"/>
<dbReference type="eggNOG" id="COG1364">
    <property type="taxonomic scope" value="Bacteria"/>
</dbReference>
<dbReference type="HOGENOM" id="CLU_027172_1_0_9"/>
<dbReference type="OrthoDB" id="9804242at2"/>
<dbReference type="PhylomeDB" id="Q8Y6U2"/>
<dbReference type="BioCyc" id="LMON169963:LMO1590-MONOMER"/>
<dbReference type="UniPathway" id="UPA00068">
    <property type="reaction ID" value="UER00106"/>
</dbReference>
<dbReference type="UniPathway" id="UPA00068">
    <property type="reaction ID" value="UER00111"/>
</dbReference>
<dbReference type="Proteomes" id="UP000000817">
    <property type="component" value="Chromosome"/>
</dbReference>
<dbReference type="GO" id="GO:0005737">
    <property type="term" value="C:cytoplasm"/>
    <property type="evidence" value="ECO:0007669"/>
    <property type="project" value="UniProtKB-SubCell"/>
</dbReference>
<dbReference type="GO" id="GO:0004358">
    <property type="term" value="F:glutamate N-acetyltransferase activity"/>
    <property type="evidence" value="ECO:0007669"/>
    <property type="project" value="UniProtKB-UniRule"/>
</dbReference>
<dbReference type="GO" id="GO:0004042">
    <property type="term" value="F:L-glutamate N-acetyltransferase activity"/>
    <property type="evidence" value="ECO:0000318"/>
    <property type="project" value="GO_Central"/>
</dbReference>
<dbReference type="GO" id="GO:0006526">
    <property type="term" value="P:L-arginine biosynthetic process"/>
    <property type="evidence" value="ECO:0007669"/>
    <property type="project" value="UniProtKB-UniRule"/>
</dbReference>
<dbReference type="GO" id="GO:0006592">
    <property type="term" value="P:ornithine biosynthetic process"/>
    <property type="evidence" value="ECO:0000318"/>
    <property type="project" value="GO_Central"/>
</dbReference>
<dbReference type="CDD" id="cd02152">
    <property type="entry name" value="OAT"/>
    <property type="match status" value="1"/>
</dbReference>
<dbReference type="FunFam" id="3.10.20.340:FF:000001">
    <property type="entry name" value="Arginine biosynthesis bifunctional protein ArgJ, chloroplastic"/>
    <property type="match status" value="1"/>
</dbReference>
<dbReference type="FunFam" id="3.60.70.12:FF:000001">
    <property type="entry name" value="Arginine biosynthesis bifunctional protein ArgJ, chloroplastic"/>
    <property type="match status" value="1"/>
</dbReference>
<dbReference type="FunFam" id="3.30.2330.10:FF:000001">
    <property type="entry name" value="Arginine biosynthesis bifunctional protein ArgJ, mitochondrial"/>
    <property type="match status" value="1"/>
</dbReference>
<dbReference type="Gene3D" id="3.30.2330.10">
    <property type="entry name" value="arginine biosynthesis bifunctional protein suprefamily"/>
    <property type="match status" value="1"/>
</dbReference>
<dbReference type="Gene3D" id="3.10.20.340">
    <property type="entry name" value="ArgJ beta chain, C-terminal domain"/>
    <property type="match status" value="1"/>
</dbReference>
<dbReference type="Gene3D" id="3.60.70.12">
    <property type="entry name" value="L-amino peptidase D-ALA esterase/amidase"/>
    <property type="match status" value="1"/>
</dbReference>
<dbReference type="HAMAP" id="MF_01106">
    <property type="entry name" value="ArgJ"/>
    <property type="match status" value="1"/>
</dbReference>
<dbReference type="InterPro" id="IPR002813">
    <property type="entry name" value="Arg_biosynth_ArgJ"/>
</dbReference>
<dbReference type="InterPro" id="IPR016117">
    <property type="entry name" value="ArgJ-like_dom_sf"/>
</dbReference>
<dbReference type="InterPro" id="IPR042195">
    <property type="entry name" value="ArgJ_beta_C"/>
</dbReference>
<dbReference type="NCBIfam" id="TIGR00120">
    <property type="entry name" value="ArgJ"/>
    <property type="match status" value="1"/>
</dbReference>
<dbReference type="NCBIfam" id="NF003802">
    <property type="entry name" value="PRK05388.1"/>
    <property type="match status" value="1"/>
</dbReference>
<dbReference type="PANTHER" id="PTHR23100">
    <property type="entry name" value="ARGININE BIOSYNTHESIS BIFUNCTIONAL PROTEIN ARGJ"/>
    <property type="match status" value="1"/>
</dbReference>
<dbReference type="PANTHER" id="PTHR23100:SF0">
    <property type="entry name" value="ARGININE BIOSYNTHESIS BIFUNCTIONAL PROTEIN ARGJ, MITOCHONDRIAL"/>
    <property type="match status" value="1"/>
</dbReference>
<dbReference type="Pfam" id="PF01960">
    <property type="entry name" value="ArgJ"/>
    <property type="match status" value="1"/>
</dbReference>
<dbReference type="SUPFAM" id="SSF56266">
    <property type="entry name" value="DmpA/ArgJ-like"/>
    <property type="match status" value="1"/>
</dbReference>
<name>ARGJ_LISMO</name>
<feature type="chain" id="PRO_0000002187" description="Arginine biosynthesis bifunctional protein ArgJ alpha chain" evidence="1">
    <location>
        <begin position="1"/>
        <end position="184"/>
    </location>
</feature>
<feature type="chain" id="PRO_0000002188" description="Arginine biosynthesis bifunctional protein ArgJ beta chain" evidence="1">
    <location>
        <begin position="185"/>
        <end position="398"/>
    </location>
</feature>
<feature type="active site" description="Nucleophile" evidence="1">
    <location>
        <position position="185"/>
    </location>
</feature>
<feature type="binding site" evidence="1">
    <location>
        <position position="148"/>
    </location>
    <ligand>
        <name>substrate</name>
    </ligand>
</feature>
<feature type="binding site" evidence="1">
    <location>
        <position position="174"/>
    </location>
    <ligand>
        <name>substrate</name>
    </ligand>
</feature>
<feature type="binding site" evidence="1">
    <location>
        <position position="185"/>
    </location>
    <ligand>
        <name>substrate</name>
    </ligand>
</feature>
<feature type="binding site" evidence="1">
    <location>
        <position position="271"/>
    </location>
    <ligand>
        <name>substrate</name>
    </ligand>
</feature>
<feature type="binding site" evidence="1">
    <location>
        <position position="393"/>
    </location>
    <ligand>
        <name>substrate</name>
    </ligand>
</feature>
<feature type="binding site" evidence="1">
    <location>
        <position position="398"/>
    </location>
    <ligand>
        <name>substrate</name>
    </ligand>
</feature>
<feature type="site" description="Involved in the stabilization of negative charge on the oxyanion by the formation of the oxyanion hole" evidence="1">
    <location>
        <position position="113"/>
    </location>
</feature>
<feature type="site" description="Involved in the stabilization of negative charge on the oxyanion by the formation of the oxyanion hole" evidence="1">
    <location>
        <position position="114"/>
    </location>
</feature>
<feature type="site" description="Cleavage; by autolysis" evidence="1">
    <location>
        <begin position="184"/>
        <end position="185"/>
    </location>
</feature>